<name>RL35_ZYMMO</name>
<feature type="chain" id="PRO_0000258790" description="Large ribosomal subunit protein bL35">
    <location>
        <begin position="1"/>
        <end position="67"/>
    </location>
</feature>
<proteinExistence type="inferred from homology"/>
<keyword id="KW-1185">Reference proteome</keyword>
<keyword id="KW-0687">Ribonucleoprotein</keyword>
<keyword id="KW-0689">Ribosomal protein</keyword>
<sequence length="67" mass="7700">MPKLKTKSGVKKRFKFTANGKVKHGVAGKRHRLISHNAKYIRQHRRTDVVSSTENRTIKAWAPYGLN</sequence>
<protein>
    <recommendedName>
        <fullName evidence="1">Large ribosomal subunit protein bL35</fullName>
    </recommendedName>
    <alternativeName>
        <fullName evidence="2">50S ribosomal protein L35</fullName>
    </alternativeName>
</protein>
<gene>
    <name evidence="1" type="primary">rpmI</name>
    <name type="ordered locus">ZMO1516</name>
</gene>
<accession>Q5NMC0</accession>
<reference key="1">
    <citation type="journal article" date="2005" name="Nat. Biotechnol.">
        <title>The genome sequence of the ethanologenic bacterium Zymomonas mobilis ZM4.</title>
        <authorList>
            <person name="Seo J.-S."/>
            <person name="Chong H."/>
            <person name="Park H.S."/>
            <person name="Yoon K.-O."/>
            <person name="Jung C."/>
            <person name="Kim J.J."/>
            <person name="Hong J.H."/>
            <person name="Kim H."/>
            <person name="Kim J.-H."/>
            <person name="Kil J.-I."/>
            <person name="Park C.J."/>
            <person name="Oh H.-M."/>
            <person name="Lee J.-S."/>
            <person name="Jin S.-J."/>
            <person name="Um H.-W."/>
            <person name="Lee H.-J."/>
            <person name="Oh S.-J."/>
            <person name="Kim J.Y."/>
            <person name="Kang H.L."/>
            <person name="Lee S.Y."/>
            <person name="Lee K.J."/>
            <person name="Kang H.S."/>
        </authorList>
    </citation>
    <scope>NUCLEOTIDE SEQUENCE [LARGE SCALE GENOMIC DNA]</scope>
    <source>
        <strain>ATCC 31821 / ZM4 / CP4</strain>
    </source>
</reference>
<organism>
    <name type="scientific">Zymomonas mobilis subsp. mobilis (strain ATCC 31821 / ZM4 / CP4)</name>
    <dbReference type="NCBI Taxonomy" id="264203"/>
    <lineage>
        <taxon>Bacteria</taxon>
        <taxon>Pseudomonadati</taxon>
        <taxon>Pseudomonadota</taxon>
        <taxon>Alphaproteobacteria</taxon>
        <taxon>Sphingomonadales</taxon>
        <taxon>Zymomonadaceae</taxon>
        <taxon>Zymomonas</taxon>
    </lineage>
</organism>
<comment type="similarity">
    <text evidence="1">Belongs to the bacterial ribosomal protein bL35 family.</text>
</comment>
<evidence type="ECO:0000255" key="1">
    <source>
        <dbReference type="HAMAP-Rule" id="MF_00514"/>
    </source>
</evidence>
<evidence type="ECO:0000305" key="2"/>
<dbReference type="EMBL" id="AE008692">
    <property type="protein sequence ID" value="AAV90140.1"/>
    <property type="molecule type" value="Genomic_DNA"/>
</dbReference>
<dbReference type="SMR" id="Q5NMC0"/>
<dbReference type="STRING" id="264203.ZMO1516"/>
<dbReference type="KEGG" id="zmo:ZMO1516"/>
<dbReference type="eggNOG" id="COG0291">
    <property type="taxonomic scope" value="Bacteria"/>
</dbReference>
<dbReference type="HOGENOM" id="CLU_169643_2_1_5"/>
<dbReference type="Proteomes" id="UP000001173">
    <property type="component" value="Chromosome"/>
</dbReference>
<dbReference type="GO" id="GO:1990904">
    <property type="term" value="C:ribonucleoprotein complex"/>
    <property type="evidence" value="ECO:0007669"/>
    <property type="project" value="UniProtKB-KW"/>
</dbReference>
<dbReference type="GO" id="GO:0005840">
    <property type="term" value="C:ribosome"/>
    <property type="evidence" value="ECO:0007669"/>
    <property type="project" value="UniProtKB-KW"/>
</dbReference>
<dbReference type="GO" id="GO:0003735">
    <property type="term" value="F:structural constituent of ribosome"/>
    <property type="evidence" value="ECO:0007669"/>
    <property type="project" value="InterPro"/>
</dbReference>
<dbReference type="GO" id="GO:0006412">
    <property type="term" value="P:translation"/>
    <property type="evidence" value="ECO:0007669"/>
    <property type="project" value="UniProtKB-UniRule"/>
</dbReference>
<dbReference type="FunFam" id="4.10.410.60:FF:000001">
    <property type="entry name" value="50S ribosomal protein L35"/>
    <property type="match status" value="1"/>
</dbReference>
<dbReference type="Gene3D" id="4.10.410.60">
    <property type="match status" value="1"/>
</dbReference>
<dbReference type="HAMAP" id="MF_00514">
    <property type="entry name" value="Ribosomal_bL35"/>
    <property type="match status" value="1"/>
</dbReference>
<dbReference type="InterPro" id="IPR001706">
    <property type="entry name" value="Ribosomal_bL35"/>
</dbReference>
<dbReference type="InterPro" id="IPR021137">
    <property type="entry name" value="Ribosomal_bL35-like"/>
</dbReference>
<dbReference type="InterPro" id="IPR018265">
    <property type="entry name" value="Ribosomal_bL35_CS"/>
</dbReference>
<dbReference type="InterPro" id="IPR037229">
    <property type="entry name" value="Ribosomal_bL35_sf"/>
</dbReference>
<dbReference type="NCBIfam" id="TIGR00001">
    <property type="entry name" value="rpmI_bact"/>
    <property type="match status" value="1"/>
</dbReference>
<dbReference type="Pfam" id="PF01632">
    <property type="entry name" value="Ribosomal_L35p"/>
    <property type="match status" value="1"/>
</dbReference>
<dbReference type="PRINTS" id="PR00064">
    <property type="entry name" value="RIBOSOMALL35"/>
</dbReference>
<dbReference type="SUPFAM" id="SSF143034">
    <property type="entry name" value="L35p-like"/>
    <property type="match status" value="1"/>
</dbReference>
<dbReference type="PROSITE" id="PS00936">
    <property type="entry name" value="RIBOSOMAL_L35"/>
    <property type="match status" value="1"/>
</dbReference>